<organism>
    <name type="scientific">Homo sapiens</name>
    <name type="common">Human</name>
    <dbReference type="NCBI Taxonomy" id="9606"/>
    <lineage>
        <taxon>Eukaryota</taxon>
        <taxon>Metazoa</taxon>
        <taxon>Chordata</taxon>
        <taxon>Craniata</taxon>
        <taxon>Vertebrata</taxon>
        <taxon>Euteleostomi</taxon>
        <taxon>Mammalia</taxon>
        <taxon>Eutheria</taxon>
        <taxon>Euarchontoglires</taxon>
        <taxon>Primates</taxon>
        <taxon>Haplorrhini</taxon>
        <taxon>Catarrhini</taxon>
        <taxon>Hominidae</taxon>
        <taxon>Homo</taxon>
    </lineage>
</organism>
<dbReference type="EMBL" id="L28997">
    <property type="protein sequence ID" value="AAC37567.1"/>
    <property type="molecule type" value="mRNA"/>
</dbReference>
<dbReference type="EMBL" id="AF493887">
    <property type="protein sequence ID" value="AAM12601.1"/>
    <property type="molecule type" value="mRNA"/>
</dbReference>
<dbReference type="EMBL" id="BT007260">
    <property type="protein sequence ID" value="AAP35924.1"/>
    <property type="molecule type" value="mRNA"/>
</dbReference>
<dbReference type="EMBL" id="AK301701">
    <property type="protein sequence ID" value="BAG63173.1"/>
    <property type="molecule type" value="mRNA"/>
</dbReference>
<dbReference type="EMBL" id="AK311793">
    <property type="protein sequence ID" value="BAG34736.1"/>
    <property type="molecule type" value="mRNA"/>
</dbReference>
<dbReference type="EMBL" id="BX537387">
    <property type="protein sequence ID" value="CAD97629.1"/>
    <property type="molecule type" value="mRNA"/>
</dbReference>
<dbReference type="EMBL" id="AC063948">
    <property type="status" value="NOT_ANNOTATED_CDS"/>
    <property type="molecule type" value="Genomic_DNA"/>
</dbReference>
<dbReference type="EMBL" id="CH471054">
    <property type="protein sequence ID" value="EAW97658.1"/>
    <property type="molecule type" value="Genomic_DNA"/>
</dbReference>
<dbReference type="EMBL" id="BC007000">
    <property type="protein sequence ID" value="AAH07000.1"/>
    <property type="molecule type" value="mRNA"/>
</dbReference>
<dbReference type="CCDS" id="CCDS44958.1">
    <molecule id="P40616-1"/>
</dbReference>
<dbReference type="RefSeq" id="NP_001168.1">
    <molecule id="P40616-1"/>
    <property type="nucleotide sequence ID" value="NM_001177.6"/>
</dbReference>
<dbReference type="PDB" id="1UPT">
    <property type="method" value="X-ray"/>
    <property type="resolution" value="1.70 A"/>
    <property type="chains" value="A/C/E/G=15-181"/>
</dbReference>
<dbReference type="PDB" id="4DCN">
    <property type="method" value="X-ray"/>
    <property type="resolution" value="3.01 A"/>
    <property type="chains" value="A/B=14-179"/>
</dbReference>
<dbReference type="PDB" id="5EE5">
    <property type="method" value="X-ray"/>
    <property type="resolution" value="2.28 A"/>
    <property type="chains" value="B=15-181"/>
</dbReference>
<dbReference type="PDB" id="5J5C">
    <property type="method" value="X-ray"/>
    <property type="resolution" value="3.40 A"/>
    <property type="chains" value="A=16-181"/>
</dbReference>
<dbReference type="PDBsum" id="1UPT"/>
<dbReference type="PDBsum" id="4DCN"/>
<dbReference type="PDBsum" id="5EE5"/>
<dbReference type="PDBsum" id="5J5C"/>
<dbReference type="SMR" id="P40616"/>
<dbReference type="BioGRID" id="106893">
    <property type="interactions" value="205"/>
</dbReference>
<dbReference type="CORUM" id="P40616"/>
<dbReference type="FunCoup" id="P40616">
    <property type="interactions" value="2682"/>
</dbReference>
<dbReference type="IntAct" id="P40616">
    <property type="interactions" value="62"/>
</dbReference>
<dbReference type="MINT" id="P40616"/>
<dbReference type="STRING" id="9606.ENSP00000261636"/>
<dbReference type="DrugBank" id="DB04315">
    <property type="generic name" value="Guanosine-5'-Diphosphate"/>
</dbReference>
<dbReference type="GlyGen" id="P40616">
    <property type="glycosylation" value="1 site, 1 O-linked glycan (1 site)"/>
</dbReference>
<dbReference type="iPTMnet" id="P40616"/>
<dbReference type="MetOSite" id="P40616"/>
<dbReference type="PhosphoSitePlus" id="P40616"/>
<dbReference type="SwissPalm" id="P40616"/>
<dbReference type="BioMuta" id="ARL1"/>
<dbReference type="DMDM" id="728888"/>
<dbReference type="jPOST" id="P40616"/>
<dbReference type="MassIVE" id="P40616"/>
<dbReference type="PaxDb" id="9606-ENSP00000261636"/>
<dbReference type="PeptideAtlas" id="P40616"/>
<dbReference type="ProteomicsDB" id="5387"/>
<dbReference type="ProteomicsDB" id="55375">
    <molecule id="P40616-1"/>
</dbReference>
<dbReference type="Pumba" id="P40616"/>
<dbReference type="TopDownProteomics" id="P40616-1">
    <molecule id="P40616-1"/>
</dbReference>
<dbReference type="Antibodypedia" id="30383">
    <property type="antibodies" value="283 antibodies from 27 providers"/>
</dbReference>
<dbReference type="DNASU" id="400"/>
<dbReference type="Ensembl" id="ENST00000261636.13">
    <molecule id="P40616-1"/>
    <property type="protein sequence ID" value="ENSP00000261636.8"/>
    <property type="gene ID" value="ENSG00000120805.14"/>
</dbReference>
<dbReference type="Ensembl" id="ENST00000536227.5">
    <molecule id="P40616-2"/>
    <property type="protein sequence ID" value="ENSP00000441808.1"/>
    <property type="gene ID" value="ENSG00000120805.14"/>
</dbReference>
<dbReference type="Ensembl" id="ENST00000551828.5">
    <molecule id="P40616-2"/>
    <property type="protein sequence ID" value="ENSP00000448850.1"/>
    <property type="gene ID" value="ENSG00000120805.14"/>
</dbReference>
<dbReference type="GeneID" id="400"/>
<dbReference type="KEGG" id="hsa:400"/>
<dbReference type="MANE-Select" id="ENST00000261636.13">
    <property type="protein sequence ID" value="ENSP00000261636.8"/>
    <property type="RefSeq nucleotide sequence ID" value="NM_001177.6"/>
    <property type="RefSeq protein sequence ID" value="NP_001168.1"/>
</dbReference>
<dbReference type="UCSC" id="uc001tib.4">
    <molecule id="P40616-1"/>
    <property type="organism name" value="human"/>
</dbReference>
<dbReference type="AGR" id="HGNC:692"/>
<dbReference type="CTD" id="400"/>
<dbReference type="DisGeNET" id="400"/>
<dbReference type="GeneCards" id="ARL1"/>
<dbReference type="HGNC" id="HGNC:692">
    <property type="gene designation" value="ARL1"/>
</dbReference>
<dbReference type="HPA" id="ENSG00000120805">
    <property type="expression patterns" value="Low tissue specificity"/>
</dbReference>
<dbReference type="MIM" id="603425">
    <property type="type" value="gene"/>
</dbReference>
<dbReference type="neXtProt" id="NX_P40616"/>
<dbReference type="OpenTargets" id="ENSG00000120805"/>
<dbReference type="PharmGKB" id="PA24985"/>
<dbReference type="VEuPathDB" id="HostDB:ENSG00000120805"/>
<dbReference type="eggNOG" id="KOG0072">
    <property type="taxonomic scope" value="Eukaryota"/>
</dbReference>
<dbReference type="GeneTree" id="ENSGT00940000155118"/>
<dbReference type="HOGENOM" id="CLU_040729_9_4_1"/>
<dbReference type="InParanoid" id="P40616"/>
<dbReference type="OMA" id="MGAGMSW"/>
<dbReference type="OrthoDB" id="2011769at2759"/>
<dbReference type="PAN-GO" id="P40616">
    <property type="GO annotations" value="5 GO annotations based on evolutionary models"/>
</dbReference>
<dbReference type="PhylomeDB" id="P40616"/>
<dbReference type="TreeFam" id="TF105461"/>
<dbReference type="PathwayCommons" id="P40616"/>
<dbReference type="Reactome" id="R-HSA-6811440">
    <property type="pathway name" value="Retrograde transport at the Trans-Golgi-Network"/>
</dbReference>
<dbReference type="SignaLink" id="P40616"/>
<dbReference type="BioGRID-ORCS" id="400">
    <property type="hits" value="96 hits in 1158 CRISPR screens"/>
</dbReference>
<dbReference type="ChiTaRS" id="ARL1">
    <property type="organism name" value="human"/>
</dbReference>
<dbReference type="EvolutionaryTrace" id="P40616"/>
<dbReference type="GeneWiki" id="ARL1"/>
<dbReference type="GenomeRNAi" id="400"/>
<dbReference type="Pharos" id="P40616">
    <property type="development level" value="Tbio"/>
</dbReference>
<dbReference type="PRO" id="PR:P40616"/>
<dbReference type="Proteomes" id="UP000005640">
    <property type="component" value="Chromosome 12"/>
</dbReference>
<dbReference type="RNAct" id="P40616">
    <property type="molecule type" value="protein"/>
</dbReference>
<dbReference type="Bgee" id="ENSG00000120805">
    <property type="expression patterns" value="Expressed in islet of Langerhans and 215 other cell types or tissues"/>
</dbReference>
<dbReference type="ExpressionAtlas" id="P40616">
    <property type="expression patterns" value="baseline and differential"/>
</dbReference>
<dbReference type="GO" id="GO:0005737">
    <property type="term" value="C:cytoplasm"/>
    <property type="evidence" value="ECO:0000250"/>
    <property type="project" value="UniProtKB"/>
</dbReference>
<dbReference type="GO" id="GO:0005829">
    <property type="term" value="C:cytosol"/>
    <property type="evidence" value="ECO:0000304"/>
    <property type="project" value="Reactome"/>
</dbReference>
<dbReference type="GO" id="GO:0005794">
    <property type="term" value="C:Golgi apparatus"/>
    <property type="evidence" value="ECO:0000314"/>
    <property type="project" value="HPA"/>
</dbReference>
<dbReference type="GO" id="GO:0000139">
    <property type="term" value="C:Golgi membrane"/>
    <property type="evidence" value="ECO:0007669"/>
    <property type="project" value="UniProtKB-SubCell"/>
</dbReference>
<dbReference type="GO" id="GO:0005802">
    <property type="term" value="C:trans-Golgi network"/>
    <property type="evidence" value="ECO:0000314"/>
    <property type="project" value="CACAO"/>
</dbReference>
<dbReference type="GO" id="GO:0032588">
    <property type="term" value="C:trans-Golgi network membrane"/>
    <property type="evidence" value="ECO:0000304"/>
    <property type="project" value="Reactome"/>
</dbReference>
<dbReference type="GO" id="GO:0008047">
    <property type="term" value="F:enzyme activator activity"/>
    <property type="evidence" value="ECO:0000314"/>
    <property type="project" value="UniProtKB"/>
</dbReference>
<dbReference type="GO" id="GO:0005525">
    <property type="term" value="F:GTP binding"/>
    <property type="evidence" value="ECO:0000314"/>
    <property type="project" value="UniProtKB"/>
</dbReference>
<dbReference type="GO" id="GO:0003924">
    <property type="term" value="F:GTPase activity"/>
    <property type="evidence" value="ECO:0000314"/>
    <property type="project" value="UniProtKB"/>
</dbReference>
<dbReference type="GO" id="GO:0046872">
    <property type="term" value="F:metal ion binding"/>
    <property type="evidence" value="ECO:0007669"/>
    <property type="project" value="UniProtKB-KW"/>
</dbReference>
<dbReference type="GO" id="GO:1990583">
    <property type="term" value="F:phospholipase D activator activity"/>
    <property type="evidence" value="ECO:0000314"/>
    <property type="project" value="UniProtKB"/>
</dbReference>
<dbReference type="GO" id="GO:0019904">
    <property type="term" value="F:protein domain specific binding"/>
    <property type="evidence" value="ECO:0000353"/>
    <property type="project" value="UniProtKB"/>
</dbReference>
<dbReference type="GO" id="GO:0007030">
    <property type="term" value="P:Golgi organization"/>
    <property type="evidence" value="ECO:0000250"/>
    <property type="project" value="UniProtKB"/>
</dbReference>
<dbReference type="GO" id="GO:0006886">
    <property type="term" value="P:intracellular protein transport"/>
    <property type="evidence" value="ECO:0000318"/>
    <property type="project" value="GO_Central"/>
</dbReference>
<dbReference type="GO" id="GO:0034067">
    <property type="term" value="P:protein localization to Golgi apparatus"/>
    <property type="evidence" value="ECO:0000315"/>
    <property type="project" value="UniProtKB"/>
</dbReference>
<dbReference type="GO" id="GO:0042147">
    <property type="term" value="P:retrograde transport, endosome to Golgi"/>
    <property type="evidence" value="ECO:0000315"/>
    <property type="project" value="UniProtKB"/>
</dbReference>
<dbReference type="GO" id="GO:0009404">
    <property type="term" value="P:toxin metabolic process"/>
    <property type="evidence" value="ECO:0000314"/>
    <property type="project" value="UniProtKB"/>
</dbReference>
<dbReference type="GO" id="GO:0016192">
    <property type="term" value="P:vesicle-mediated transport"/>
    <property type="evidence" value="ECO:0000318"/>
    <property type="project" value="GO_Central"/>
</dbReference>
<dbReference type="CDD" id="cd04151">
    <property type="entry name" value="Arl1"/>
    <property type="match status" value="1"/>
</dbReference>
<dbReference type="FunFam" id="3.40.50.300:FF:000306">
    <property type="entry name" value="ADP-ribosylation factor-like protein 1"/>
    <property type="match status" value="1"/>
</dbReference>
<dbReference type="Gene3D" id="3.40.50.300">
    <property type="entry name" value="P-loop containing nucleotide triphosphate hydrolases"/>
    <property type="match status" value="1"/>
</dbReference>
<dbReference type="InterPro" id="IPR027417">
    <property type="entry name" value="P-loop_NTPase"/>
</dbReference>
<dbReference type="InterPro" id="IPR005225">
    <property type="entry name" value="Small_GTP-bd"/>
</dbReference>
<dbReference type="InterPro" id="IPR024156">
    <property type="entry name" value="Small_GTPase_ARF"/>
</dbReference>
<dbReference type="InterPro" id="IPR006689">
    <property type="entry name" value="Small_GTPase_ARF/SAR"/>
</dbReference>
<dbReference type="NCBIfam" id="TIGR00231">
    <property type="entry name" value="small_GTP"/>
    <property type="match status" value="1"/>
</dbReference>
<dbReference type="PANTHER" id="PTHR11711">
    <property type="entry name" value="ADP RIBOSYLATION FACTOR-RELATED"/>
    <property type="match status" value="1"/>
</dbReference>
<dbReference type="Pfam" id="PF00025">
    <property type="entry name" value="Arf"/>
    <property type="match status" value="1"/>
</dbReference>
<dbReference type="PRINTS" id="PR00328">
    <property type="entry name" value="SAR1GTPBP"/>
</dbReference>
<dbReference type="SMART" id="SM00177">
    <property type="entry name" value="ARF"/>
    <property type="match status" value="1"/>
</dbReference>
<dbReference type="SMART" id="SM00175">
    <property type="entry name" value="RAB"/>
    <property type="match status" value="1"/>
</dbReference>
<dbReference type="SMART" id="SM00178">
    <property type="entry name" value="SAR"/>
    <property type="match status" value="1"/>
</dbReference>
<dbReference type="SUPFAM" id="SSF52540">
    <property type="entry name" value="P-loop containing nucleoside triphosphate hydrolases"/>
    <property type="match status" value="1"/>
</dbReference>
<dbReference type="PROSITE" id="PS51417">
    <property type="entry name" value="ARF"/>
    <property type="match status" value="1"/>
</dbReference>
<gene>
    <name type="primary">ARL1</name>
</gene>
<accession>P40616</accession>
<accession>B4DWW1</accession>
<accession>P80417</accession>
<accession>Q53XB1</accession>
<proteinExistence type="evidence at protein level"/>
<name>ARL1_HUMAN</name>
<keyword id="KW-0002">3D-structure</keyword>
<keyword id="KW-0025">Alternative splicing</keyword>
<keyword id="KW-0333">Golgi apparatus</keyword>
<keyword id="KW-0342">GTP-binding</keyword>
<keyword id="KW-0449">Lipoprotein</keyword>
<keyword id="KW-0460">Magnesium</keyword>
<keyword id="KW-0472">Membrane</keyword>
<keyword id="KW-0479">Metal-binding</keyword>
<keyword id="KW-0519">Myristate</keyword>
<keyword id="KW-0547">Nucleotide-binding</keyword>
<keyword id="KW-1267">Proteomics identification</keyword>
<keyword id="KW-1185">Reference proteome</keyword>
<reference key="1">
    <citation type="submission" date="1995-01" db="UniProtKB">
        <authorList>
            <person name="Rosenwald A.G."/>
            <person name="Kahn R.A."/>
        </authorList>
    </citation>
    <scope>NUCLEOTIDE SEQUENCE [MRNA] (ISOFORM 1)</scope>
    <source>
        <tissue>Umbilical vein endothelial cell</tissue>
    </source>
</reference>
<reference key="2">
    <citation type="journal article" date="1995" name="J. Biol. Chem.">
        <title>Different ARF domains are required for the activation of cholera toxin and phospholipase D.</title>
        <authorList>
            <person name="Zhang G.-F."/>
            <person name="Patton W.A."/>
            <person name="Lee F.-J.S."/>
            <person name="Liyange M."/>
            <person name="Han J.-S."/>
            <person name="Rhee S.G."/>
            <person name="Moss J."/>
            <person name="Vaughan M."/>
        </authorList>
    </citation>
    <scope>NUCLEOTIDE SEQUENCE [MRNA] (ISOFORM 1)</scope>
</reference>
<reference key="3">
    <citation type="submission" date="2002-03" db="EMBL/GenBank/DDBJ databases">
        <title>cDNA clones of human proteins involved in signal transduction sequenced by the Guthrie cDNA resource center (www.cdna.org).</title>
        <authorList>
            <person name="Puhl H.L. III"/>
            <person name="Ikeda S.R."/>
            <person name="Aronstam R.S."/>
        </authorList>
    </citation>
    <scope>NUCLEOTIDE SEQUENCE [LARGE SCALE MRNA] (ISOFORM 1)</scope>
    <source>
        <tissue>Brain</tissue>
    </source>
</reference>
<reference key="4">
    <citation type="submission" date="2003-05" db="EMBL/GenBank/DDBJ databases">
        <title>Cloning of human full-length CDSs in BD Creator(TM) system donor vector.</title>
        <authorList>
            <person name="Kalnine N."/>
            <person name="Chen X."/>
            <person name="Rolfs A."/>
            <person name="Halleck A."/>
            <person name="Hines L."/>
            <person name="Eisenstein S."/>
            <person name="Koundinya M."/>
            <person name="Raphael J."/>
            <person name="Moreira D."/>
            <person name="Kelley T."/>
            <person name="LaBaer J."/>
            <person name="Lin Y."/>
            <person name="Phelan M."/>
            <person name="Farmer A."/>
        </authorList>
    </citation>
    <scope>NUCLEOTIDE SEQUENCE [LARGE SCALE MRNA] (ISOFORM 1)</scope>
</reference>
<reference key="5">
    <citation type="journal article" date="2004" name="Nat. Genet.">
        <title>Complete sequencing and characterization of 21,243 full-length human cDNAs.</title>
        <authorList>
            <person name="Ota T."/>
            <person name="Suzuki Y."/>
            <person name="Nishikawa T."/>
            <person name="Otsuki T."/>
            <person name="Sugiyama T."/>
            <person name="Irie R."/>
            <person name="Wakamatsu A."/>
            <person name="Hayashi K."/>
            <person name="Sato H."/>
            <person name="Nagai K."/>
            <person name="Kimura K."/>
            <person name="Makita H."/>
            <person name="Sekine M."/>
            <person name="Obayashi M."/>
            <person name="Nishi T."/>
            <person name="Shibahara T."/>
            <person name="Tanaka T."/>
            <person name="Ishii S."/>
            <person name="Yamamoto J."/>
            <person name="Saito K."/>
            <person name="Kawai Y."/>
            <person name="Isono Y."/>
            <person name="Nakamura Y."/>
            <person name="Nagahari K."/>
            <person name="Murakami K."/>
            <person name="Yasuda T."/>
            <person name="Iwayanagi T."/>
            <person name="Wagatsuma M."/>
            <person name="Shiratori A."/>
            <person name="Sudo H."/>
            <person name="Hosoiri T."/>
            <person name="Kaku Y."/>
            <person name="Kodaira H."/>
            <person name="Kondo H."/>
            <person name="Sugawara M."/>
            <person name="Takahashi M."/>
            <person name="Kanda K."/>
            <person name="Yokoi T."/>
            <person name="Furuya T."/>
            <person name="Kikkawa E."/>
            <person name="Omura Y."/>
            <person name="Abe K."/>
            <person name="Kamihara K."/>
            <person name="Katsuta N."/>
            <person name="Sato K."/>
            <person name="Tanikawa M."/>
            <person name="Yamazaki M."/>
            <person name="Ninomiya K."/>
            <person name="Ishibashi T."/>
            <person name="Yamashita H."/>
            <person name="Murakawa K."/>
            <person name="Fujimori K."/>
            <person name="Tanai H."/>
            <person name="Kimata M."/>
            <person name="Watanabe M."/>
            <person name="Hiraoka S."/>
            <person name="Chiba Y."/>
            <person name="Ishida S."/>
            <person name="Ono Y."/>
            <person name="Takiguchi S."/>
            <person name="Watanabe S."/>
            <person name="Yosida M."/>
            <person name="Hotuta T."/>
            <person name="Kusano J."/>
            <person name="Kanehori K."/>
            <person name="Takahashi-Fujii A."/>
            <person name="Hara H."/>
            <person name="Tanase T.-O."/>
            <person name="Nomura Y."/>
            <person name="Togiya S."/>
            <person name="Komai F."/>
            <person name="Hara R."/>
            <person name="Takeuchi K."/>
            <person name="Arita M."/>
            <person name="Imose N."/>
            <person name="Musashino K."/>
            <person name="Yuuki H."/>
            <person name="Oshima A."/>
            <person name="Sasaki N."/>
            <person name="Aotsuka S."/>
            <person name="Yoshikawa Y."/>
            <person name="Matsunawa H."/>
            <person name="Ichihara T."/>
            <person name="Shiohata N."/>
            <person name="Sano S."/>
            <person name="Moriya S."/>
            <person name="Momiyama H."/>
            <person name="Satoh N."/>
            <person name="Takami S."/>
            <person name="Terashima Y."/>
            <person name="Suzuki O."/>
            <person name="Nakagawa S."/>
            <person name="Senoh A."/>
            <person name="Mizoguchi H."/>
            <person name="Goto Y."/>
            <person name="Shimizu F."/>
            <person name="Wakebe H."/>
            <person name="Hishigaki H."/>
            <person name="Watanabe T."/>
            <person name="Sugiyama A."/>
            <person name="Takemoto M."/>
            <person name="Kawakami B."/>
            <person name="Yamazaki M."/>
            <person name="Watanabe K."/>
            <person name="Kumagai A."/>
            <person name="Itakura S."/>
            <person name="Fukuzumi Y."/>
            <person name="Fujimori Y."/>
            <person name="Komiyama M."/>
            <person name="Tashiro H."/>
            <person name="Tanigami A."/>
            <person name="Fujiwara T."/>
            <person name="Ono T."/>
            <person name="Yamada K."/>
            <person name="Fujii Y."/>
            <person name="Ozaki K."/>
            <person name="Hirao M."/>
            <person name="Ohmori Y."/>
            <person name="Kawabata A."/>
            <person name="Hikiji T."/>
            <person name="Kobatake N."/>
            <person name="Inagaki H."/>
            <person name="Ikema Y."/>
            <person name="Okamoto S."/>
            <person name="Okitani R."/>
            <person name="Kawakami T."/>
            <person name="Noguchi S."/>
            <person name="Itoh T."/>
            <person name="Shigeta K."/>
            <person name="Senba T."/>
            <person name="Matsumura K."/>
            <person name="Nakajima Y."/>
            <person name="Mizuno T."/>
            <person name="Morinaga M."/>
            <person name="Sasaki M."/>
            <person name="Togashi T."/>
            <person name="Oyama M."/>
            <person name="Hata H."/>
            <person name="Watanabe M."/>
            <person name="Komatsu T."/>
            <person name="Mizushima-Sugano J."/>
            <person name="Satoh T."/>
            <person name="Shirai Y."/>
            <person name="Takahashi Y."/>
            <person name="Nakagawa K."/>
            <person name="Okumura K."/>
            <person name="Nagase T."/>
            <person name="Nomura N."/>
            <person name="Kikuchi H."/>
            <person name="Masuho Y."/>
            <person name="Yamashita R."/>
            <person name="Nakai K."/>
            <person name="Yada T."/>
            <person name="Nakamura Y."/>
            <person name="Ohara O."/>
            <person name="Isogai T."/>
            <person name="Sugano S."/>
        </authorList>
    </citation>
    <scope>NUCLEOTIDE SEQUENCE [LARGE SCALE MRNA] (ISOFORMS 1 AND 2)</scope>
    <source>
        <tissue>Placenta</tissue>
        <tissue>Testis</tissue>
    </source>
</reference>
<reference key="6">
    <citation type="journal article" date="2007" name="BMC Genomics">
        <title>The full-ORF clone resource of the German cDNA consortium.</title>
        <authorList>
            <person name="Bechtel S."/>
            <person name="Rosenfelder H."/>
            <person name="Duda A."/>
            <person name="Schmidt C.P."/>
            <person name="Ernst U."/>
            <person name="Wellenreuther R."/>
            <person name="Mehrle A."/>
            <person name="Schuster C."/>
            <person name="Bahr A."/>
            <person name="Bloecker H."/>
            <person name="Heubner D."/>
            <person name="Hoerlein A."/>
            <person name="Michel G."/>
            <person name="Wedler H."/>
            <person name="Koehrer K."/>
            <person name="Ottenwaelder B."/>
            <person name="Poustka A."/>
            <person name="Wiemann S."/>
            <person name="Schupp I."/>
        </authorList>
    </citation>
    <scope>NUCLEOTIDE SEQUENCE [LARGE SCALE MRNA] (ISOFORM 1)</scope>
    <source>
        <tissue>Retina</tissue>
    </source>
</reference>
<reference key="7">
    <citation type="journal article" date="2006" name="Nature">
        <title>The finished DNA sequence of human chromosome 12.</title>
        <authorList>
            <person name="Scherer S.E."/>
            <person name="Muzny D.M."/>
            <person name="Buhay C.J."/>
            <person name="Chen R."/>
            <person name="Cree A."/>
            <person name="Ding Y."/>
            <person name="Dugan-Rocha S."/>
            <person name="Gill R."/>
            <person name="Gunaratne P."/>
            <person name="Harris R.A."/>
            <person name="Hawes A.C."/>
            <person name="Hernandez J."/>
            <person name="Hodgson A.V."/>
            <person name="Hume J."/>
            <person name="Jackson A."/>
            <person name="Khan Z.M."/>
            <person name="Kovar-Smith C."/>
            <person name="Lewis L.R."/>
            <person name="Lozado R.J."/>
            <person name="Metzker M.L."/>
            <person name="Milosavljevic A."/>
            <person name="Miner G.R."/>
            <person name="Montgomery K.T."/>
            <person name="Morgan M.B."/>
            <person name="Nazareth L.V."/>
            <person name="Scott G."/>
            <person name="Sodergren E."/>
            <person name="Song X.-Z."/>
            <person name="Steffen D."/>
            <person name="Lovering R.C."/>
            <person name="Wheeler D.A."/>
            <person name="Worley K.C."/>
            <person name="Yuan Y."/>
            <person name="Zhang Z."/>
            <person name="Adams C.Q."/>
            <person name="Ansari-Lari M.A."/>
            <person name="Ayele M."/>
            <person name="Brown M.J."/>
            <person name="Chen G."/>
            <person name="Chen Z."/>
            <person name="Clerc-Blankenburg K.P."/>
            <person name="Davis C."/>
            <person name="Delgado O."/>
            <person name="Dinh H.H."/>
            <person name="Draper H."/>
            <person name="Gonzalez-Garay M.L."/>
            <person name="Havlak P."/>
            <person name="Jackson L.R."/>
            <person name="Jacob L.S."/>
            <person name="Kelly S.H."/>
            <person name="Li L."/>
            <person name="Li Z."/>
            <person name="Liu J."/>
            <person name="Liu W."/>
            <person name="Lu J."/>
            <person name="Maheshwari M."/>
            <person name="Nguyen B.-V."/>
            <person name="Okwuonu G.O."/>
            <person name="Pasternak S."/>
            <person name="Perez L.M."/>
            <person name="Plopper F.J.H."/>
            <person name="Santibanez J."/>
            <person name="Shen H."/>
            <person name="Tabor P.E."/>
            <person name="Verduzco D."/>
            <person name="Waldron L."/>
            <person name="Wang Q."/>
            <person name="Williams G.A."/>
            <person name="Zhang J."/>
            <person name="Zhou J."/>
            <person name="Allen C.C."/>
            <person name="Amin A.G."/>
            <person name="Anyalebechi V."/>
            <person name="Bailey M."/>
            <person name="Barbaria J.A."/>
            <person name="Bimage K.E."/>
            <person name="Bryant N.P."/>
            <person name="Burch P.E."/>
            <person name="Burkett C.E."/>
            <person name="Burrell K.L."/>
            <person name="Calderon E."/>
            <person name="Cardenas V."/>
            <person name="Carter K."/>
            <person name="Casias K."/>
            <person name="Cavazos I."/>
            <person name="Cavazos S.R."/>
            <person name="Ceasar H."/>
            <person name="Chacko J."/>
            <person name="Chan S.N."/>
            <person name="Chavez D."/>
            <person name="Christopoulos C."/>
            <person name="Chu J."/>
            <person name="Cockrell R."/>
            <person name="Cox C.D."/>
            <person name="Dang M."/>
            <person name="Dathorne S.R."/>
            <person name="David R."/>
            <person name="Davis C.M."/>
            <person name="Davy-Carroll L."/>
            <person name="Deshazo D.R."/>
            <person name="Donlin J.E."/>
            <person name="D'Souza L."/>
            <person name="Eaves K.A."/>
            <person name="Egan A."/>
            <person name="Emery-Cohen A.J."/>
            <person name="Escotto M."/>
            <person name="Flagg N."/>
            <person name="Forbes L.D."/>
            <person name="Gabisi A.M."/>
            <person name="Garza M."/>
            <person name="Hamilton C."/>
            <person name="Henderson N."/>
            <person name="Hernandez O."/>
            <person name="Hines S."/>
            <person name="Hogues M.E."/>
            <person name="Huang M."/>
            <person name="Idlebird D.G."/>
            <person name="Johnson R."/>
            <person name="Jolivet A."/>
            <person name="Jones S."/>
            <person name="Kagan R."/>
            <person name="King L.M."/>
            <person name="Leal B."/>
            <person name="Lebow H."/>
            <person name="Lee S."/>
            <person name="LeVan J.M."/>
            <person name="Lewis L.C."/>
            <person name="London P."/>
            <person name="Lorensuhewa L.M."/>
            <person name="Loulseged H."/>
            <person name="Lovett D.A."/>
            <person name="Lucier A."/>
            <person name="Lucier R.L."/>
            <person name="Ma J."/>
            <person name="Madu R.C."/>
            <person name="Mapua P."/>
            <person name="Martindale A.D."/>
            <person name="Martinez E."/>
            <person name="Massey E."/>
            <person name="Mawhiney S."/>
            <person name="Meador M.G."/>
            <person name="Mendez S."/>
            <person name="Mercado C."/>
            <person name="Mercado I.C."/>
            <person name="Merritt C.E."/>
            <person name="Miner Z.L."/>
            <person name="Minja E."/>
            <person name="Mitchell T."/>
            <person name="Mohabbat F."/>
            <person name="Mohabbat K."/>
            <person name="Montgomery B."/>
            <person name="Moore N."/>
            <person name="Morris S."/>
            <person name="Munidasa M."/>
            <person name="Ngo R.N."/>
            <person name="Nguyen N.B."/>
            <person name="Nickerson E."/>
            <person name="Nwaokelemeh O.O."/>
            <person name="Nwokenkwo S."/>
            <person name="Obregon M."/>
            <person name="Oguh M."/>
            <person name="Oragunye N."/>
            <person name="Oviedo R.J."/>
            <person name="Parish B.J."/>
            <person name="Parker D.N."/>
            <person name="Parrish J."/>
            <person name="Parks K.L."/>
            <person name="Paul H.A."/>
            <person name="Payton B.A."/>
            <person name="Perez A."/>
            <person name="Perrin W."/>
            <person name="Pickens A."/>
            <person name="Primus E.L."/>
            <person name="Pu L.-L."/>
            <person name="Puazo M."/>
            <person name="Quiles M.M."/>
            <person name="Quiroz J.B."/>
            <person name="Rabata D."/>
            <person name="Reeves K."/>
            <person name="Ruiz S.J."/>
            <person name="Shao H."/>
            <person name="Sisson I."/>
            <person name="Sonaike T."/>
            <person name="Sorelle R.P."/>
            <person name="Sutton A.E."/>
            <person name="Svatek A.F."/>
            <person name="Svetz L.A."/>
            <person name="Tamerisa K.S."/>
            <person name="Taylor T.R."/>
            <person name="Teague B."/>
            <person name="Thomas N."/>
            <person name="Thorn R.D."/>
            <person name="Trejos Z.Y."/>
            <person name="Trevino B.K."/>
            <person name="Ukegbu O.N."/>
            <person name="Urban J.B."/>
            <person name="Vasquez L.I."/>
            <person name="Vera V.A."/>
            <person name="Villasana D.M."/>
            <person name="Wang L."/>
            <person name="Ward-Moore S."/>
            <person name="Warren J.T."/>
            <person name="Wei X."/>
            <person name="White F."/>
            <person name="Williamson A.L."/>
            <person name="Wleczyk R."/>
            <person name="Wooden H.S."/>
            <person name="Wooden S.H."/>
            <person name="Yen J."/>
            <person name="Yoon L."/>
            <person name="Yoon V."/>
            <person name="Zorrilla S.E."/>
            <person name="Nelson D."/>
            <person name="Kucherlapati R."/>
            <person name="Weinstock G."/>
            <person name="Gibbs R.A."/>
        </authorList>
    </citation>
    <scope>NUCLEOTIDE SEQUENCE [LARGE SCALE GENOMIC DNA]</scope>
</reference>
<reference key="8">
    <citation type="submission" date="2005-07" db="EMBL/GenBank/DDBJ databases">
        <authorList>
            <person name="Mural R.J."/>
            <person name="Istrail S."/>
            <person name="Sutton G.G."/>
            <person name="Florea L."/>
            <person name="Halpern A.L."/>
            <person name="Mobarry C.M."/>
            <person name="Lippert R."/>
            <person name="Walenz B."/>
            <person name="Shatkay H."/>
            <person name="Dew I."/>
            <person name="Miller J.R."/>
            <person name="Flanigan M.J."/>
            <person name="Edwards N.J."/>
            <person name="Bolanos R."/>
            <person name="Fasulo D."/>
            <person name="Halldorsson B.V."/>
            <person name="Hannenhalli S."/>
            <person name="Turner R."/>
            <person name="Yooseph S."/>
            <person name="Lu F."/>
            <person name="Nusskern D.R."/>
            <person name="Shue B.C."/>
            <person name="Zheng X.H."/>
            <person name="Zhong F."/>
            <person name="Delcher A.L."/>
            <person name="Huson D.H."/>
            <person name="Kravitz S.A."/>
            <person name="Mouchard L."/>
            <person name="Reinert K."/>
            <person name="Remington K.A."/>
            <person name="Clark A.G."/>
            <person name="Waterman M.S."/>
            <person name="Eichler E.E."/>
            <person name="Adams M.D."/>
            <person name="Hunkapiller M.W."/>
            <person name="Myers E.W."/>
            <person name="Venter J.C."/>
        </authorList>
    </citation>
    <scope>NUCLEOTIDE SEQUENCE [LARGE SCALE GENOMIC DNA]</scope>
</reference>
<reference key="9">
    <citation type="journal article" date="2004" name="Genome Res.">
        <title>The status, quality, and expansion of the NIH full-length cDNA project: the Mammalian Gene Collection (MGC).</title>
        <authorList>
            <consortium name="The MGC Project Team"/>
        </authorList>
    </citation>
    <scope>NUCLEOTIDE SEQUENCE [LARGE SCALE MRNA] (ISOFORM 1)</scope>
    <source>
        <tissue>Urinary bladder</tissue>
    </source>
</reference>
<reference key="10">
    <citation type="journal article" date="1998" name="J. Biol. Chem.">
        <title>Phospholipid- and GTP-dependent activation of cholera toxin and phospholipase D by human ADP-ribosylation factor-like protein 1 (HARL1).</title>
        <authorList>
            <person name="Hong J.-X."/>
            <person name="Lee F.-J.S."/>
            <person name="Patton W.A."/>
            <person name="Lin C.Y."/>
            <person name="Moss J."/>
            <person name="Vaughan M."/>
        </authorList>
    </citation>
    <scope>FUNCTION</scope>
    <scope>TISSUE SPECIFICITY</scope>
</reference>
<reference key="11">
    <citation type="journal article" date="2001" name="J. Biol. Chem.">
        <title>ADP-ribosylation factors (ARFs) and ARF-like 1 (ARL1) have both specific and shared effectors: characterizing ARL1-binding proteins.</title>
        <authorList>
            <person name="Van Valkenburgh H."/>
            <person name="Shern J.F."/>
            <person name="Sharer J.D."/>
            <person name="Zhu X."/>
            <person name="Kahn R.A."/>
        </authorList>
    </citation>
    <scope>INTERACTION WITH ARFIP2; GOLGA4; RGPD8; SCOC AND UNC119</scope>
    <scope>SUBCELLULAR LOCATION</scope>
    <scope>MUTAGENESIS OF GLN-71</scope>
</reference>
<reference key="12">
    <citation type="journal article" date="2003" name="Mol. Biol. Cell">
        <title>Interaction of Arl1-GTP with GRIP domains recruits autoantigens Golgin-97 and Golgin-245/p230 onto the Golgi.</title>
        <authorList>
            <person name="Lu L."/>
            <person name="Hong W."/>
        </authorList>
    </citation>
    <scope>SUBCELLULAR LOCATION</scope>
    <scope>INTERACTION WITH GOLGA1</scope>
    <scope>FUNCTION</scope>
</reference>
<reference key="13">
    <citation type="journal article" date="2011" name="BMC Syst. Biol.">
        <title>Initial characterization of the human central proteome.</title>
        <authorList>
            <person name="Burkard T.R."/>
            <person name="Planyavsky M."/>
            <person name="Kaupe I."/>
            <person name="Breitwieser F.P."/>
            <person name="Buerckstuemmer T."/>
            <person name="Bennett K.L."/>
            <person name="Superti-Furga G."/>
            <person name="Colinge J."/>
        </authorList>
    </citation>
    <scope>IDENTIFICATION BY MASS SPECTROMETRY [LARGE SCALE ANALYSIS]</scope>
</reference>
<reference key="14">
    <citation type="journal article" date="2011" name="J. Biol. Chem.">
        <title>Arfaptins are localized to the trans-Golgi by interaction with Arl1, but not Arfs.</title>
        <authorList>
            <person name="Man Z."/>
            <person name="Kondo Y."/>
            <person name="Koga H."/>
            <person name="Umino H."/>
            <person name="Nakayama K."/>
            <person name="Shin H.W."/>
        </authorList>
    </citation>
    <scope>FUNCTION</scope>
    <scope>INTERACTION WITH ARFIP1 AND ARFIP2</scope>
    <scope>MUTAGENESIS OF THR-31</scope>
    <scope>SUBCELLULAR LOCATION</scope>
</reference>
<reference key="15">
    <citation type="journal article" date="2012" name="Dev. Cell">
        <title>The BAR domain protein Arfaptin-1 controls secretory granule biogenesis at the trans-Golgi network.</title>
        <authorList>
            <person name="Gehart H."/>
            <person name="Goginashvili A."/>
            <person name="Beck R."/>
            <person name="Morvan J."/>
            <person name="Erbs E."/>
            <person name="Formentini I."/>
            <person name="De Matteis M.A."/>
            <person name="Schwab Y."/>
            <person name="Wieland F.T."/>
            <person name="Ricci R."/>
        </authorList>
    </citation>
    <scope>FUNCTION</scope>
    <scope>INTERACTION WITH ARFIP1</scope>
</reference>
<reference key="16">
    <citation type="journal article" date="2014" name="Nat. Commun.">
        <title>Global profiling of co- and post-translationally N-myristoylated proteomes in human cells.</title>
        <authorList>
            <person name="Thinon E."/>
            <person name="Serwa R.A."/>
            <person name="Broncel M."/>
            <person name="Brannigan J.A."/>
            <person name="Brassat U."/>
            <person name="Wright M.H."/>
            <person name="Heal W.P."/>
            <person name="Wilkinson A.J."/>
            <person name="Mann D.J."/>
            <person name="Tate E.W."/>
        </authorList>
    </citation>
    <scope>MYRISTOYLATION AT GLY-2</scope>
    <scope>CLEAVAGE OF INITIATOR METHIONINE</scope>
    <scope>IDENTIFICATION BY MASS SPECTROMETRY</scope>
</reference>
<reference key="17">
    <citation type="journal article" date="2015" name="Proteomics">
        <title>N-terminome analysis of the human mitochondrial proteome.</title>
        <authorList>
            <person name="Vaca Jacome A.S."/>
            <person name="Rabilloud T."/>
            <person name="Schaeffer-Reiss C."/>
            <person name="Rompais M."/>
            <person name="Ayoub D."/>
            <person name="Lane L."/>
            <person name="Bairoch A."/>
            <person name="Van Dorsselaer A."/>
            <person name="Carapito C."/>
        </authorList>
    </citation>
    <scope>IDENTIFICATION BY MASS SPECTROMETRY [LARGE SCALE ANALYSIS]</scope>
</reference>
<reference key="18">
    <citation type="journal article" date="2003" name="Mol. Cell">
        <title>Structural basis for Arl1-dependent targeting of homodimeric GRIP domains to the Golgi apparatus.</title>
        <authorList>
            <person name="Panic B."/>
            <person name="Perisic O."/>
            <person name="Veprintsev D.B."/>
            <person name="Williams R.L."/>
            <person name="Munro S."/>
        </authorList>
    </citation>
    <scope>X-RAY CRYSTALLOGRAPHY (1.7 ANGSTROMS) OF 15-181 IN COMPLEX WITH MAGNESIUM; GTP AND GOLGA4</scope>
</reference>
<reference evidence="16" key="19">
    <citation type="journal article" date="2016" name="J. Mol. Cell Biol.">
        <title>Structural basis for targeting BIG1 to Golgi apparatus through interaction of its DCB domain with Arl1.</title>
        <authorList>
            <person name="Wang R."/>
            <person name="Wang Z."/>
            <person name="Wang K."/>
            <person name="Zhang T."/>
            <person name="Ding J."/>
        </authorList>
    </citation>
    <scope>X-RAY CRYSTALLOGRAPHY (3.40 ANGSTROMS) OF 16-181</scope>
    <scope>INTERACTION WITH ARFGEF1</scope>
    <scope>FUNCTION</scope>
    <scope>SUBCELLULAR LOCATION</scope>
</reference>
<reference evidence="14" key="20">
    <citation type="journal article" date="2012" name="J. Biol. Chem.">
        <title>Structural basis for membrane binding specificity of the Bin/Amphiphysin/Rvs (BAR) domain of Arfaptin-2 determined by Arl1 GTPase.</title>
        <authorList>
            <person name="Nakamura K."/>
            <person name="Man Z."/>
            <person name="Xie Y."/>
            <person name="Hanai A."/>
            <person name="Makyio H."/>
            <person name="Kawasaki M."/>
            <person name="Kato R."/>
            <person name="Shin H.W."/>
            <person name="Nakayama K."/>
            <person name="Wakatsuki S."/>
        </authorList>
    </citation>
    <scope>X-RAY CRYSTALLOGRAPHY (3.01 ANGSTROMS) OF 14-179</scope>
    <scope>INTERACTION WITH ARFIP2</scope>
    <scope>SUBCELLULAR LOCATION</scope>
    <scope>FUNCTION</scope>
</reference>
<reference evidence="15" key="21">
    <citation type="journal article" date="2016" name="Cell Rep.">
        <title>Structural Insights into Arl1-Mediated Targeting of the Arf-GEF BIG1 to the trans-Golgi.</title>
        <authorList>
            <person name="Galindo A."/>
            <person name="Soler N."/>
            <person name="McLaughlin S.H."/>
            <person name="Yu M."/>
            <person name="Williams R.L."/>
            <person name="Munro S."/>
        </authorList>
    </citation>
    <scope>X-RAY CRYSTALLOGRAPHY (2.28 ANGSTROMS) OF 15-181 IN COMPLEX WITH GTP</scope>
    <scope>FUNCTION</scope>
    <scope>SUBCELLULAR LOCATION</scope>
    <scope>INTERACTION WITH ARFGEF1</scope>
</reference>
<sequence>MGGFFSSIFSSLFGTREMRILILGLDGAGKTTILYRLQVGEVVTTIPTIGFNVETVTYKNLKFQVWDLGGQTSIRPYWRCYYSNTDAVIYVVDSCDRDRIGISKSELVAMLEEEELRKAILVVFANKQDMEQAMTSSEMANSLGLPALKDRKWQIFKTSATKGTGLDEAMEWLVETLKSRQ</sequence>
<feature type="initiator methionine" description="Removed" evidence="8">
    <location>
        <position position="1"/>
    </location>
</feature>
<feature type="chain" id="PRO_0000207450" description="ADP-ribosylation factor-like protein 1">
    <location>
        <begin position="2"/>
        <end position="181"/>
    </location>
</feature>
<feature type="binding site" evidence="4 9 10">
    <location>
        <begin position="24"/>
        <end position="31"/>
    </location>
    <ligand>
        <name>GTP</name>
        <dbReference type="ChEBI" id="CHEBI:37565"/>
    </ligand>
</feature>
<feature type="binding site" evidence="4">
    <location>
        <position position="31"/>
    </location>
    <ligand>
        <name>Mg(2+)</name>
        <dbReference type="ChEBI" id="CHEBI:18420"/>
    </ligand>
</feature>
<feature type="binding site" evidence="4 9 10">
    <location>
        <begin position="45"/>
        <end position="48"/>
    </location>
    <ligand>
        <name>GTP</name>
        <dbReference type="ChEBI" id="CHEBI:37565"/>
    </ligand>
</feature>
<feature type="binding site" evidence="4">
    <location>
        <position position="48"/>
    </location>
    <ligand>
        <name>Mg(2+)</name>
        <dbReference type="ChEBI" id="CHEBI:18420"/>
    </ligand>
</feature>
<feature type="binding site" evidence="4 9 10">
    <location>
        <position position="70"/>
    </location>
    <ligand>
        <name>GTP</name>
        <dbReference type="ChEBI" id="CHEBI:37565"/>
    </ligand>
</feature>
<feature type="binding site" evidence="4 9 10">
    <location>
        <begin position="126"/>
        <end position="129"/>
    </location>
    <ligand>
        <name>GTP</name>
        <dbReference type="ChEBI" id="CHEBI:37565"/>
    </ligand>
</feature>
<feature type="binding site" evidence="4 9 10">
    <location>
        <begin position="160"/>
        <end position="161"/>
    </location>
    <ligand>
        <name>GTP</name>
        <dbReference type="ChEBI" id="CHEBI:37565"/>
    </ligand>
</feature>
<feature type="lipid moiety-binding region" description="N-myristoyl glycine" evidence="8">
    <location>
        <position position="2"/>
    </location>
</feature>
<feature type="splice variant" id="VSP_056566" description="In isoform 2." evidence="12">
    <location>
        <begin position="1"/>
        <end position="17"/>
    </location>
</feature>
<feature type="mutagenesis site" description="Loss of interaction with ARFIP1 and ARFIP2." evidence="5">
    <original>T</original>
    <variation>N</variation>
    <location>
        <position position="31"/>
    </location>
</feature>
<feature type="mutagenesis site" description="Altered Golgi structure with an engorged lumen. Interacts with ARFIP2, GOLGA4, RGPD8, SCOC and UNC119." evidence="2">
    <original>Q</original>
    <variation>L</variation>
    <location>
        <position position="71"/>
    </location>
</feature>
<feature type="strand" evidence="17">
    <location>
        <begin position="18"/>
        <end position="23"/>
    </location>
</feature>
<feature type="helix" evidence="17">
    <location>
        <begin position="30"/>
        <end position="39"/>
    </location>
</feature>
<feature type="strand" evidence="17">
    <location>
        <begin position="49"/>
        <end position="58"/>
    </location>
</feature>
<feature type="strand" evidence="17">
    <location>
        <begin position="61"/>
        <end position="68"/>
    </location>
</feature>
<feature type="helix" evidence="17">
    <location>
        <begin position="72"/>
        <end position="81"/>
    </location>
</feature>
<feature type="strand" evidence="17">
    <location>
        <begin position="86"/>
        <end position="93"/>
    </location>
</feature>
<feature type="turn" evidence="18">
    <location>
        <begin position="97"/>
        <end position="99"/>
    </location>
</feature>
<feature type="helix" evidence="17">
    <location>
        <begin position="100"/>
        <end position="111"/>
    </location>
</feature>
<feature type="helix" evidence="17">
    <location>
        <begin position="114"/>
        <end position="116"/>
    </location>
</feature>
<feature type="strand" evidence="17">
    <location>
        <begin position="120"/>
        <end position="126"/>
    </location>
</feature>
<feature type="helix" evidence="17">
    <location>
        <begin position="136"/>
        <end position="143"/>
    </location>
</feature>
<feature type="helix" evidence="17">
    <location>
        <begin position="145"/>
        <end position="147"/>
    </location>
</feature>
<feature type="strand" evidence="17">
    <location>
        <begin position="153"/>
        <end position="157"/>
    </location>
</feature>
<feature type="turn" evidence="17">
    <location>
        <begin position="160"/>
        <end position="162"/>
    </location>
</feature>
<feature type="helix" evidence="17">
    <location>
        <begin position="166"/>
        <end position="178"/>
    </location>
</feature>
<evidence type="ECO:0000250" key="1">
    <source>
        <dbReference type="UniProtKB" id="P61212"/>
    </source>
</evidence>
<evidence type="ECO:0000269" key="2">
    <source>
    </source>
</evidence>
<evidence type="ECO:0000269" key="3">
    <source>
    </source>
</evidence>
<evidence type="ECO:0000269" key="4">
    <source>
    </source>
</evidence>
<evidence type="ECO:0000269" key="5">
    <source>
    </source>
</evidence>
<evidence type="ECO:0000269" key="6">
    <source>
    </source>
</evidence>
<evidence type="ECO:0000269" key="7">
    <source>
    </source>
</evidence>
<evidence type="ECO:0000269" key="8">
    <source>
    </source>
</evidence>
<evidence type="ECO:0000269" key="9">
    <source>
    </source>
</evidence>
<evidence type="ECO:0000269" key="10">
    <source>
    </source>
</evidence>
<evidence type="ECO:0000269" key="11">
    <source>
    </source>
</evidence>
<evidence type="ECO:0000303" key="12">
    <source>
    </source>
</evidence>
<evidence type="ECO:0000305" key="13"/>
<evidence type="ECO:0007744" key="14">
    <source>
        <dbReference type="PDB" id="4DCN"/>
    </source>
</evidence>
<evidence type="ECO:0007744" key="15">
    <source>
        <dbReference type="PDB" id="5EE5"/>
    </source>
</evidence>
<evidence type="ECO:0007744" key="16">
    <source>
        <dbReference type="PDB" id="5J5C"/>
    </source>
</evidence>
<evidence type="ECO:0007829" key="17">
    <source>
        <dbReference type="PDB" id="1UPT"/>
    </source>
</evidence>
<evidence type="ECO:0007829" key="18">
    <source>
        <dbReference type="PDB" id="5EE5"/>
    </source>
</evidence>
<protein>
    <recommendedName>
        <fullName>ADP-ribosylation factor-like protein 1</fullName>
    </recommendedName>
</protein>
<comment type="function">
    <text evidence="3 5 6 7 9 10 11">GTP-binding protein that recruits several effectors, such as golgins, arfaptins and Arf-GEFs to the trans-Golgi network, and modulates their functions at the Golgi complex (PubMed:21239483, PubMed:22679020, PubMed:27373159, PubMed:27436755, PubMed:9624189, PubMed:12972563). Plays thereby a role in a wide range of fundamental cellular processes, including cell polarity, innate immunity, or protein secretion mediated by arfaptins, which were shown to play a role in maintaining insulin secretion from pancreatic beta cells (PubMed:22981988).</text>
</comment>
<comment type="subunit">
    <text evidence="1 2 3 4 5 6 7 9 10">The GTP-bound form interacts with GOLGA1 (PubMed:12972563). The GTP-bound form interacts with GOLGA4 and RGPD8. The GTP-bound form directly interacts with ARFIP2 (PubMed:11303027, PubMed:21239483, PubMed:22679020). Binds to SCOC, preferentially in its GTP-bound form. May interact with UNC119 (PubMed:11303027, PubMed:14580338). Interacts with ARFIP1; this interaction directs ARFIP1 to the trans-Golgi membranes (PubMed:21239483, PubMed:22981988). Interacts with ARFGEF1 (via N-terminus) (PubMed:27373159, PubMed:27436755).</text>
</comment>
<comment type="interaction">
    <interactant intactId="EBI-1052746">
        <id>P40616</id>
    </interactant>
    <interactant intactId="EBI-2808808">
        <id>P53367</id>
        <label>ARFIP1</label>
    </interactant>
    <organismsDiffer>false</organismsDiffer>
    <experiments>3</experiments>
</comment>
<comment type="subcellular location">
    <subcellularLocation>
        <location evidence="2 3">Golgi apparatus membrane</location>
        <topology evidence="2">Peripheral membrane protein</topology>
        <orientation evidence="2">Cytoplasmic side</orientation>
    </subcellularLocation>
    <subcellularLocation>
        <location evidence="5 9 10">Golgi apparatus</location>
        <location evidence="5 9 10">trans-Golgi network membrane</location>
    </subcellularLocation>
    <subcellularLocation>
        <location evidence="13">Membrane</location>
        <topology evidence="13">Lipid-anchor</topology>
    </subcellularLocation>
</comment>
<comment type="alternative products">
    <event type="alternative splicing"/>
    <isoform>
        <id>P40616-1</id>
        <name>1</name>
        <sequence type="displayed"/>
    </isoform>
    <isoform>
        <id>P40616-2</id>
        <name>2</name>
        <sequence type="described" ref="VSP_056566"/>
    </isoform>
</comment>
<comment type="tissue specificity">
    <text evidence="11">Detected in heart, liver, lung and liver (at protein level). Detected in fetal heart, lung, liver and kidney. Detected in adult heart, placenta, lung, liver, skeletal muscle, kidney and pancreas.</text>
</comment>
<comment type="similarity">
    <text evidence="13">Belongs to the small GTPase superfamily. Arf family.</text>
</comment>